<protein>
    <recommendedName>
        <fullName>Putative uncharacterized transmembrane protein DDB_G0281883</fullName>
    </recommendedName>
</protein>
<proteinExistence type="predicted"/>
<name>Y4266_DICDI</name>
<evidence type="ECO:0000255" key="1"/>
<evidence type="ECO:0000256" key="2">
    <source>
        <dbReference type="SAM" id="MobiDB-lite"/>
    </source>
</evidence>
<evidence type="ECO:0000305" key="3"/>
<accession>Q54TB2</accession>
<reference key="1">
    <citation type="journal article" date="2005" name="Nature">
        <title>The genome of the social amoeba Dictyostelium discoideum.</title>
        <authorList>
            <person name="Eichinger L."/>
            <person name="Pachebat J.A."/>
            <person name="Gloeckner G."/>
            <person name="Rajandream M.A."/>
            <person name="Sucgang R."/>
            <person name="Berriman M."/>
            <person name="Song J."/>
            <person name="Olsen R."/>
            <person name="Szafranski K."/>
            <person name="Xu Q."/>
            <person name="Tunggal B."/>
            <person name="Kummerfeld S."/>
            <person name="Madera M."/>
            <person name="Konfortov B.A."/>
            <person name="Rivero F."/>
            <person name="Bankier A.T."/>
            <person name="Lehmann R."/>
            <person name="Hamlin N."/>
            <person name="Davies R."/>
            <person name="Gaudet P."/>
            <person name="Fey P."/>
            <person name="Pilcher K."/>
            <person name="Chen G."/>
            <person name="Saunders D."/>
            <person name="Sodergren E.J."/>
            <person name="Davis P."/>
            <person name="Kerhornou A."/>
            <person name="Nie X."/>
            <person name="Hall N."/>
            <person name="Anjard C."/>
            <person name="Hemphill L."/>
            <person name="Bason N."/>
            <person name="Farbrother P."/>
            <person name="Desany B."/>
            <person name="Just E."/>
            <person name="Morio T."/>
            <person name="Rost R."/>
            <person name="Churcher C.M."/>
            <person name="Cooper J."/>
            <person name="Haydock S."/>
            <person name="van Driessche N."/>
            <person name="Cronin A."/>
            <person name="Goodhead I."/>
            <person name="Muzny D.M."/>
            <person name="Mourier T."/>
            <person name="Pain A."/>
            <person name="Lu M."/>
            <person name="Harper D."/>
            <person name="Lindsay R."/>
            <person name="Hauser H."/>
            <person name="James K.D."/>
            <person name="Quiles M."/>
            <person name="Madan Babu M."/>
            <person name="Saito T."/>
            <person name="Buchrieser C."/>
            <person name="Wardroper A."/>
            <person name="Felder M."/>
            <person name="Thangavelu M."/>
            <person name="Johnson D."/>
            <person name="Knights A."/>
            <person name="Loulseged H."/>
            <person name="Mungall K.L."/>
            <person name="Oliver K."/>
            <person name="Price C."/>
            <person name="Quail M.A."/>
            <person name="Urushihara H."/>
            <person name="Hernandez J."/>
            <person name="Rabbinowitsch E."/>
            <person name="Steffen D."/>
            <person name="Sanders M."/>
            <person name="Ma J."/>
            <person name="Kohara Y."/>
            <person name="Sharp S."/>
            <person name="Simmonds M.N."/>
            <person name="Spiegler S."/>
            <person name="Tivey A."/>
            <person name="Sugano S."/>
            <person name="White B."/>
            <person name="Walker D."/>
            <person name="Woodward J.R."/>
            <person name="Winckler T."/>
            <person name="Tanaka Y."/>
            <person name="Shaulsky G."/>
            <person name="Schleicher M."/>
            <person name="Weinstock G.M."/>
            <person name="Rosenthal A."/>
            <person name="Cox E.C."/>
            <person name="Chisholm R.L."/>
            <person name="Gibbs R.A."/>
            <person name="Loomis W.F."/>
            <person name="Platzer M."/>
            <person name="Kay R.R."/>
            <person name="Williams J.G."/>
            <person name="Dear P.H."/>
            <person name="Noegel A.A."/>
            <person name="Barrell B.G."/>
            <person name="Kuspa A."/>
        </authorList>
    </citation>
    <scope>NUCLEOTIDE SEQUENCE [LARGE SCALE GENOMIC DNA]</scope>
    <source>
        <strain>AX4</strain>
    </source>
</reference>
<feature type="chain" id="PRO_0000352411" description="Putative uncharacterized transmembrane protein DDB_G0281883">
    <location>
        <begin position="1"/>
        <end position="234"/>
    </location>
</feature>
<feature type="transmembrane region" description="Helical" evidence="1">
    <location>
        <begin position="13"/>
        <end position="32"/>
    </location>
</feature>
<feature type="region of interest" description="Disordered" evidence="2">
    <location>
        <begin position="102"/>
        <end position="130"/>
    </location>
</feature>
<feature type="region of interest" description="Disordered" evidence="2">
    <location>
        <begin position="159"/>
        <end position="185"/>
    </location>
</feature>
<feature type="compositionally biased region" description="Low complexity" evidence="2">
    <location>
        <begin position="103"/>
        <end position="130"/>
    </location>
</feature>
<feature type="compositionally biased region" description="Acidic residues" evidence="2">
    <location>
        <begin position="167"/>
        <end position="185"/>
    </location>
</feature>
<keyword id="KW-0472">Membrane</keyword>
<keyword id="KW-1185">Reference proteome</keyword>
<keyword id="KW-0812">Transmembrane</keyword>
<keyword id="KW-1133">Transmembrane helix</keyword>
<gene>
    <name type="ORF">DDB_G0281883</name>
</gene>
<comment type="subcellular location">
    <subcellularLocation>
        <location evidence="3">Membrane</location>
        <topology evidence="3">Single-pass membrane protein</topology>
    </subcellularLocation>
</comment>
<organism>
    <name type="scientific">Dictyostelium discoideum</name>
    <name type="common">Social amoeba</name>
    <dbReference type="NCBI Taxonomy" id="44689"/>
    <lineage>
        <taxon>Eukaryota</taxon>
        <taxon>Amoebozoa</taxon>
        <taxon>Evosea</taxon>
        <taxon>Eumycetozoa</taxon>
        <taxon>Dictyostelia</taxon>
        <taxon>Dictyosteliales</taxon>
        <taxon>Dictyosteliaceae</taxon>
        <taxon>Dictyostelium</taxon>
    </lineage>
</organism>
<sequence length="234" mass="27344">MKKKKEKEKEKQKSINYYIFFFQYTLVYNTIQINKIYKLFYHVFITKKKNYFSKSNYNSPPKSVFSSGRENVYLPEEYKKKIEKENQENLEILENSMKDASHSKTTSLPFSSSSPQSSSSSSSSSSSSNSSLSCSLIFSSTLSLIKSELIKDDTIKYSESDSKSDSEFDSESNSDFDSESESEYEYEYEYESKSNSEQPIINNYLDHTYIYNFAIVVKAIHYLHHFIKEMLKFV</sequence>
<dbReference type="EMBL" id="AAFI02000043">
    <property type="protein sequence ID" value="EAL66501.1"/>
    <property type="molecule type" value="Genomic_DNA"/>
</dbReference>
<dbReference type="RefSeq" id="XP_640477.1">
    <property type="nucleotide sequence ID" value="XM_635385.1"/>
</dbReference>
<dbReference type="PaxDb" id="44689-DDB0204266"/>
<dbReference type="EnsemblProtists" id="EAL66501">
    <property type="protein sequence ID" value="EAL66501"/>
    <property type="gene ID" value="DDB_G0281883"/>
</dbReference>
<dbReference type="GeneID" id="8623290"/>
<dbReference type="KEGG" id="ddi:DDB_G0281883"/>
<dbReference type="dictyBase" id="DDB_G0281883"/>
<dbReference type="VEuPathDB" id="AmoebaDB:DDB_G0281883"/>
<dbReference type="HOGENOM" id="CLU_1186863_0_0_1"/>
<dbReference type="InParanoid" id="Q54TB2"/>
<dbReference type="PRO" id="PR:Q54TB2"/>
<dbReference type="Proteomes" id="UP000002195">
    <property type="component" value="Chromosome 3"/>
</dbReference>
<dbReference type="GO" id="GO:0016020">
    <property type="term" value="C:membrane"/>
    <property type="evidence" value="ECO:0007669"/>
    <property type="project" value="UniProtKB-SubCell"/>
</dbReference>